<dbReference type="EMBL" id="AY358605">
    <property type="protein sequence ID" value="AAQ88968.1"/>
    <property type="molecule type" value="mRNA"/>
</dbReference>
<dbReference type="EMBL" id="AK312077">
    <property type="protein sequence ID" value="BAG35013.1"/>
    <property type="molecule type" value="mRNA"/>
</dbReference>
<dbReference type="EMBL" id="AC010913">
    <property type="protein sequence ID" value="AAX88901.1"/>
    <property type="molecule type" value="Genomic_DNA"/>
</dbReference>
<dbReference type="EMBL" id="CH471053">
    <property type="protein sequence ID" value="EAW99742.1"/>
    <property type="molecule type" value="Genomic_DNA"/>
</dbReference>
<dbReference type="EMBL" id="CH471053">
    <property type="protein sequence ID" value="EAW99743.1"/>
    <property type="molecule type" value="Genomic_DNA"/>
</dbReference>
<dbReference type="EMBL" id="BC005069">
    <property type="protein sequence ID" value="AAH05069.1"/>
    <property type="molecule type" value="mRNA"/>
</dbReference>
<dbReference type="CCDS" id="CCDS1924.1"/>
<dbReference type="RefSeq" id="NP_115695.1">
    <property type="nucleotide sequence ID" value="NM_032319.3"/>
</dbReference>
<dbReference type="SMR" id="Q9BSG0"/>
<dbReference type="BioGRID" id="124006">
    <property type="interactions" value="9"/>
</dbReference>
<dbReference type="FunCoup" id="Q9BSG0">
    <property type="interactions" value="279"/>
</dbReference>
<dbReference type="IntAct" id="Q9BSG0">
    <property type="interactions" value="7"/>
</dbReference>
<dbReference type="STRING" id="9606.ENSP00000258083"/>
<dbReference type="GlyCosmos" id="Q9BSG0">
    <property type="glycosylation" value="1 site, No reported glycans"/>
</dbReference>
<dbReference type="GlyGen" id="Q9BSG0">
    <property type="glycosylation" value="1 site"/>
</dbReference>
<dbReference type="iPTMnet" id="Q9BSG0"/>
<dbReference type="PhosphoSitePlus" id="Q9BSG0"/>
<dbReference type="BioMuta" id="PRADC1"/>
<dbReference type="DMDM" id="55976581"/>
<dbReference type="jPOST" id="Q9BSG0"/>
<dbReference type="MassIVE" id="Q9BSG0"/>
<dbReference type="PaxDb" id="9606-ENSP00000258083"/>
<dbReference type="PeptideAtlas" id="Q9BSG0"/>
<dbReference type="ProteomicsDB" id="78887"/>
<dbReference type="Pumba" id="Q9BSG0"/>
<dbReference type="Antibodypedia" id="31326">
    <property type="antibodies" value="13 antibodies from 7 providers"/>
</dbReference>
<dbReference type="DNASU" id="84279"/>
<dbReference type="Ensembl" id="ENST00000258083.3">
    <property type="protein sequence ID" value="ENSP00000258083.2"/>
    <property type="gene ID" value="ENSG00000135617.4"/>
</dbReference>
<dbReference type="GeneID" id="84279"/>
<dbReference type="KEGG" id="hsa:84279"/>
<dbReference type="MANE-Select" id="ENST00000258083.3">
    <property type="protein sequence ID" value="ENSP00000258083.2"/>
    <property type="RefSeq nucleotide sequence ID" value="NM_032319.3"/>
    <property type="RefSeq protein sequence ID" value="NP_115695.1"/>
</dbReference>
<dbReference type="UCSC" id="uc002siy.3">
    <property type="organism name" value="human"/>
</dbReference>
<dbReference type="AGR" id="HGNC:16047"/>
<dbReference type="CTD" id="84279"/>
<dbReference type="DisGeNET" id="84279"/>
<dbReference type="GeneCards" id="PRADC1"/>
<dbReference type="HGNC" id="HGNC:16047">
    <property type="gene designation" value="PRADC1"/>
</dbReference>
<dbReference type="HPA" id="ENSG00000135617">
    <property type="expression patterns" value="Tissue enhanced (skeletal)"/>
</dbReference>
<dbReference type="MIM" id="619674">
    <property type="type" value="gene"/>
</dbReference>
<dbReference type="neXtProt" id="NX_Q9BSG0"/>
<dbReference type="OpenTargets" id="ENSG00000135617"/>
<dbReference type="PharmGKB" id="PA25895"/>
<dbReference type="VEuPathDB" id="HostDB:ENSG00000135617"/>
<dbReference type="eggNOG" id="KOG3920">
    <property type="taxonomic scope" value="Eukaryota"/>
</dbReference>
<dbReference type="GeneTree" id="ENSGT00390000009837"/>
<dbReference type="HOGENOM" id="CLU_084006_2_0_1"/>
<dbReference type="InParanoid" id="Q9BSG0"/>
<dbReference type="OMA" id="ELMQPPW"/>
<dbReference type="OrthoDB" id="206201at2759"/>
<dbReference type="PAN-GO" id="Q9BSG0">
    <property type="GO annotations" value="0 GO annotations based on evolutionary models"/>
</dbReference>
<dbReference type="PhylomeDB" id="Q9BSG0"/>
<dbReference type="TreeFam" id="TF335463"/>
<dbReference type="PathwayCommons" id="Q9BSG0"/>
<dbReference type="SignaLink" id="Q9BSG0"/>
<dbReference type="BioGRID-ORCS" id="84279">
    <property type="hits" value="15 hits in 1153 CRISPR screens"/>
</dbReference>
<dbReference type="ChiTaRS" id="PRADC1">
    <property type="organism name" value="human"/>
</dbReference>
<dbReference type="GenomeRNAi" id="84279"/>
<dbReference type="Pharos" id="Q9BSG0">
    <property type="development level" value="Tdark"/>
</dbReference>
<dbReference type="PRO" id="PR:Q9BSG0"/>
<dbReference type="Proteomes" id="UP000005640">
    <property type="component" value="Chromosome 2"/>
</dbReference>
<dbReference type="RNAct" id="Q9BSG0">
    <property type="molecule type" value="protein"/>
</dbReference>
<dbReference type="Bgee" id="ENSG00000135617">
    <property type="expression patterns" value="Expressed in apex of heart and 161 other cell types or tissues"/>
</dbReference>
<dbReference type="GO" id="GO:0005576">
    <property type="term" value="C:extracellular region"/>
    <property type="evidence" value="ECO:0000314"/>
    <property type="project" value="UniProtKB"/>
</dbReference>
<dbReference type="CDD" id="cd02127">
    <property type="entry name" value="PA_hPAP21_like"/>
    <property type="match status" value="1"/>
</dbReference>
<dbReference type="FunFam" id="3.50.30.30:FF:000017">
    <property type="entry name" value="Protease-associated domain-containing protein 1"/>
    <property type="match status" value="1"/>
</dbReference>
<dbReference type="Gene3D" id="3.50.30.30">
    <property type="match status" value="1"/>
</dbReference>
<dbReference type="InterPro" id="IPR046450">
    <property type="entry name" value="PA_dom_sf"/>
</dbReference>
<dbReference type="InterPro" id="IPR003137">
    <property type="entry name" value="PA_domain"/>
</dbReference>
<dbReference type="InterPro" id="IPR037323">
    <property type="entry name" value="PRADC1-like_PA"/>
</dbReference>
<dbReference type="PANTHER" id="PTHR22702">
    <property type="entry name" value="PROTEASE-ASSOCIATED DOMAIN-CONTAINING PROTEIN"/>
    <property type="match status" value="1"/>
</dbReference>
<dbReference type="PANTHER" id="PTHR22702:SF1">
    <property type="entry name" value="PROTEASE-ASSOCIATED DOMAIN-CONTAINING PROTEIN 1"/>
    <property type="match status" value="1"/>
</dbReference>
<dbReference type="Pfam" id="PF02225">
    <property type="entry name" value="PA"/>
    <property type="match status" value="1"/>
</dbReference>
<dbReference type="SUPFAM" id="SSF52025">
    <property type="entry name" value="PA domain"/>
    <property type="match status" value="1"/>
</dbReference>
<protein>
    <recommendedName>
        <fullName>Protease-associated domain-containing protein 1</fullName>
    </recommendedName>
    <alternativeName>
        <fullName>Protease-associated domain-containing protein of 21 kDa</fullName>
        <shortName>hPAP21</shortName>
    </alternativeName>
</protein>
<feature type="signal peptide" evidence="2">
    <location>
        <begin position="1"/>
        <end position="21"/>
    </location>
</feature>
<feature type="chain" id="PRO_0000022001" description="Protease-associated domain-containing protein 1">
    <location>
        <begin position="22"/>
        <end position="188"/>
    </location>
</feature>
<feature type="domain" description="PA">
    <location>
        <begin position="83"/>
        <end position="163"/>
    </location>
</feature>
<feature type="site" description="Not glycosylated" evidence="4">
    <location>
        <position position="121"/>
    </location>
</feature>
<feature type="glycosylation site" description="N-linked (GlcNAc...) asparagine" evidence="3">
    <location>
        <position position="171"/>
    </location>
</feature>
<feature type="mutagenesis site" description="Does not affect glycosylation state. Abolishes N-glycosylation; when associated with Q-171." evidence="3">
    <original>N</original>
    <variation>Q</variation>
    <location>
        <position position="121"/>
    </location>
</feature>
<feature type="mutagenesis site" description="Abolishes N-glycosylation. Abolishes N-glycosylation; when associated with Q-121." evidence="3">
    <original>N</original>
    <variation>Q</variation>
    <location>
        <position position="171"/>
    </location>
</feature>
<organism>
    <name type="scientific">Homo sapiens</name>
    <name type="common">Human</name>
    <dbReference type="NCBI Taxonomy" id="9606"/>
    <lineage>
        <taxon>Eukaryota</taxon>
        <taxon>Metazoa</taxon>
        <taxon>Chordata</taxon>
        <taxon>Craniata</taxon>
        <taxon>Vertebrata</taxon>
        <taxon>Euteleostomi</taxon>
        <taxon>Mammalia</taxon>
        <taxon>Eutheria</taxon>
        <taxon>Euarchontoglires</taxon>
        <taxon>Primates</taxon>
        <taxon>Haplorrhini</taxon>
        <taxon>Catarrhini</taxon>
        <taxon>Hominidae</taxon>
        <taxon>Homo</taxon>
    </lineage>
</organism>
<keyword id="KW-0325">Glycoprotein</keyword>
<keyword id="KW-1267">Proteomics identification</keyword>
<keyword id="KW-1185">Reference proteome</keyword>
<keyword id="KW-0964">Secreted</keyword>
<keyword id="KW-0732">Signal</keyword>
<reference key="1">
    <citation type="journal article" date="2003" name="Genome Res.">
        <title>The secreted protein discovery initiative (SPDI), a large-scale effort to identify novel human secreted and transmembrane proteins: a bioinformatics assessment.</title>
        <authorList>
            <person name="Clark H.F."/>
            <person name="Gurney A.L."/>
            <person name="Abaya E."/>
            <person name="Baker K."/>
            <person name="Baldwin D.T."/>
            <person name="Brush J."/>
            <person name="Chen J."/>
            <person name="Chow B."/>
            <person name="Chui C."/>
            <person name="Crowley C."/>
            <person name="Currell B."/>
            <person name="Deuel B."/>
            <person name="Dowd P."/>
            <person name="Eaton D."/>
            <person name="Foster J.S."/>
            <person name="Grimaldi C."/>
            <person name="Gu Q."/>
            <person name="Hass P.E."/>
            <person name="Heldens S."/>
            <person name="Huang A."/>
            <person name="Kim H.S."/>
            <person name="Klimowski L."/>
            <person name="Jin Y."/>
            <person name="Johnson S."/>
            <person name="Lee J."/>
            <person name="Lewis L."/>
            <person name="Liao D."/>
            <person name="Mark M.R."/>
            <person name="Robbie E."/>
            <person name="Sanchez C."/>
            <person name="Schoenfeld J."/>
            <person name="Seshagiri S."/>
            <person name="Simmons L."/>
            <person name="Singh J."/>
            <person name="Smith V."/>
            <person name="Stinson J."/>
            <person name="Vagts A."/>
            <person name="Vandlen R.L."/>
            <person name="Watanabe C."/>
            <person name="Wieand D."/>
            <person name="Woods K."/>
            <person name="Xie M.-H."/>
            <person name="Yansura D.G."/>
            <person name="Yi S."/>
            <person name="Yu G."/>
            <person name="Yuan J."/>
            <person name="Zhang M."/>
            <person name="Zhang Z."/>
            <person name="Goddard A.D."/>
            <person name="Wood W.I."/>
            <person name="Godowski P.J."/>
            <person name="Gray A.M."/>
        </authorList>
    </citation>
    <scope>NUCLEOTIDE SEQUENCE [LARGE SCALE MRNA]</scope>
</reference>
<reference key="2">
    <citation type="journal article" date="2004" name="Nat. Genet.">
        <title>Complete sequencing and characterization of 21,243 full-length human cDNAs.</title>
        <authorList>
            <person name="Ota T."/>
            <person name="Suzuki Y."/>
            <person name="Nishikawa T."/>
            <person name="Otsuki T."/>
            <person name="Sugiyama T."/>
            <person name="Irie R."/>
            <person name="Wakamatsu A."/>
            <person name="Hayashi K."/>
            <person name="Sato H."/>
            <person name="Nagai K."/>
            <person name="Kimura K."/>
            <person name="Makita H."/>
            <person name="Sekine M."/>
            <person name="Obayashi M."/>
            <person name="Nishi T."/>
            <person name="Shibahara T."/>
            <person name="Tanaka T."/>
            <person name="Ishii S."/>
            <person name="Yamamoto J."/>
            <person name="Saito K."/>
            <person name="Kawai Y."/>
            <person name="Isono Y."/>
            <person name="Nakamura Y."/>
            <person name="Nagahari K."/>
            <person name="Murakami K."/>
            <person name="Yasuda T."/>
            <person name="Iwayanagi T."/>
            <person name="Wagatsuma M."/>
            <person name="Shiratori A."/>
            <person name="Sudo H."/>
            <person name="Hosoiri T."/>
            <person name="Kaku Y."/>
            <person name="Kodaira H."/>
            <person name="Kondo H."/>
            <person name="Sugawara M."/>
            <person name="Takahashi M."/>
            <person name="Kanda K."/>
            <person name="Yokoi T."/>
            <person name="Furuya T."/>
            <person name="Kikkawa E."/>
            <person name="Omura Y."/>
            <person name="Abe K."/>
            <person name="Kamihara K."/>
            <person name="Katsuta N."/>
            <person name="Sato K."/>
            <person name="Tanikawa M."/>
            <person name="Yamazaki M."/>
            <person name="Ninomiya K."/>
            <person name="Ishibashi T."/>
            <person name="Yamashita H."/>
            <person name="Murakawa K."/>
            <person name="Fujimori K."/>
            <person name="Tanai H."/>
            <person name="Kimata M."/>
            <person name="Watanabe M."/>
            <person name="Hiraoka S."/>
            <person name="Chiba Y."/>
            <person name="Ishida S."/>
            <person name="Ono Y."/>
            <person name="Takiguchi S."/>
            <person name="Watanabe S."/>
            <person name="Yosida M."/>
            <person name="Hotuta T."/>
            <person name="Kusano J."/>
            <person name="Kanehori K."/>
            <person name="Takahashi-Fujii A."/>
            <person name="Hara H."/>
            <person name="Tanase T.-O."/>
            <person name="Nomura Y."/>
            <person name="Togiya S."/>
            <person name="Komai F."/>
            <person name="Hara R."/>
            <person name="Takeuchi K."/>
            <person name="Arita M."/>
            <person name="Imose N."/>
            <person name="Musashino K."/>
            <person name="Yuuki H."/>
            <person name="Oshima A."/>
            <person name="Sasaki N."/>
            <person name="Aotsuka S."/>
            <person name="Yoshikawa Y."/>
            <person name="Matsunawa H."/>
            <person name="Ichihara T."/>
            <person name="Shiohata N."/>
            <person name="Sano S."/>
            <person name="Moriya S."/>
            <person name="Momiyama H."/>
            <person name="Satoh N."/>
            <person name="Takami S."/>
            <person name="Terashima Y."/>
            <person name="Suzuki O."/>
            <person name="Nakagawa S."/>
            <person name="Senoh A."/>
            <person name="Mizoguchi H."/>
            <person name="Goto Y."/>
            <person name="Shimizu F."/>
            <person name="Wakebe H."/>
            <person name="Hishigaki H."/>
            <person name="Watanabe T."/>
            <person name="Sugiyama A."/>
            <person name="Takemoto M."/>
            <person name="Kawakami B."/>
            <person name="Yamazaki M."/>
            <person name="Watanabe K."/>
            <person name="Kumagai A."/>
            <person name="Itakura S."/>
            <person name="Fukuzumi Y."/>
            <person name="Fujimori Y."/>
            <person name="Komiyama M."/>
            <person name="Tashiro H."/>
            <person name="Tanigami A."/>
            <person name="Fujiwara T."/>
            <person name="Ono T."/>
            <person name="Yamada K."/>
            <person name="Fujii Y."/>
            <person name="Ozaki K."/>
            <person name="Hirao M."/>
            <person name="Ohmori Y."/>
            <person name="Kawabata A."/>
            <person name="Hikiji T."/>
            <person name="Kobatake N."/>
            <person name="Inagaki H."/>
            <person name="Ikema Y."/>
            <person name="Okamoto S."/>
            <person name="Okitani R."/>
            <person name="Kawakami T."/>
            <person name="Noguchi S."/>
            <person name="Itoh T."/>
            <person name="Shigeta K."/>
            <person name="Senba T."/>
            <person name="Matsumura K."/>
            <person name="Nakajima Y."/>
            <person name="Mizuno T."/>
            <person name="Morinaga M."/>
            <person name="Sasaki M."/>
            <person name="Togashi T."/>
            <person name="Oyama M."/>
            <person name="Hata H."/>
            <person name="Watanabe M."/>
            <person name="Komatsu T."/>
            <person name="Mizushima-Sugano J."/>
            <person name="Satoh T."/>
            <person name="Shirai Y."/>
            <person name="Takahashi Y."/>
            <person name="Nakagawa K."/>
            <person name="Okumura K."/>
            <person name="Nagase T."/>
            <person name="Nomura N."/>
            <person name="Kikuchi H."/>
            <person name="Masuho Y."/>
            <person name="Yamashita R."/>
            <person name="Nakai K."/>
            <person name="Yada T."/>
            <person name="Nakamura Y."/>
            <person name="Ohara O."/>
            <person name="Isogai T."/>
            <person name="Sugano S."/>
        </authorList>
    </citation>
    <scope>NUCLEOTIDE SEQUENCE [LARGE SCALE MRNA]</scope>
    <source>
        <tissue>Skeletal muscle</tissue>
    </source>
</reference>
<reference key="3">
    <citation type="journal article" date="2005" name="Nature">
        <title>Generation and annotation of the DNA sequences of human chromosomes 2 and 4.</title>
        <authorList>
            <person name="Hillier L.W."/>
            <person name="Graves T.A."/>
            <person name="Fulton R.S."/>
            <person name="Fulton L.A."/>
            <person name="Pepin K.H."/>
            <person name="Minx P."/>
            <person name="Wagner-McPherson C."/>
            <person name="Layman D."/>
            <person name="Wylie K."/>
            <person name="Sekhon M."/>
            <person name="Becker M.C."/>
            <person name="Fewell G.A."/>
            <person name="Delehaunty K.D."/>
            <person name="Miner T.L."/>
            <person name="Nash W.E."/>
            <person name="Kremitzki C."/>
            <person name="Oddy L."/>
            <person name="Du H."/>
            <person name="Sun H."/>
            <person name="Bradshaw-Cordum H."/>
            <person name="Ali J."/>
            <person name="Carter J."/>
            <person name="Cordes M."/>
            <person name="Harris A."/>
            <person name="Isak A."/>
            <person name="van Brunt A."/>
            <person name="Nguyen C."/>
            <person name="Du F."/>
            <person name="Courtney L."/>
            <person name="Kalicki J."/>
            <person name="Ozersky P."/>
            <person name="Abbott S."/>
            <person name="Armstrong J."/>
            <person name="Belter E.A."/>
            <person name="Caruso L."/>
            <person name="Cedroni M."/>
            <person name="Cotton M."/>
            <person name="Davidson T."/>
            <person name="Desai A."/>
            <person name="Elliott G."/>
            <person name="Erb T."/>
            <person name="Fronick C."/>
            <person name="Gaige T."/>
            <person name="Haakenson W."/>
            <person name="Haglund K."/>
            <person name="Holmes A."/>
            <person name="Harkins R."/>
            <person name="Kim K."/>
            <person name="Kruchowski S.S."/>
            <person name="Strong C.M."/>
            <person name="Grewal N."/>
            <person name="Goyea E."/>
            <person name="Hou S."/>
            <person name="Levy A."/>
            <person name="Martinka S."/>
            <person name="Mead K."/>
            <person name="McLellan M.D."/>
            <person name="Meyer R."/>
            <person name="Randall-Maher J."/>
            <person name="Tomlinson C."/>
            <person name="Dauphin-Kohlberg S."/>
            <person name="Kozlowicz-Reilly A."/>
            <person name="Shah N."/>
            <person name="Swearengen-Shahid S."/>
            <person name="Snider J."/>
            <person name="Strong J.T."/>
            <person name="Thompson J."/>
            <person name="Yoakum M."/>
            <person name="Leonard S."/>
            <person name="Pearman C."/>
            <person name="Trani L."/>
            <person name="Radionenko M."/>
            <person name="Waligorski J.E."/>
            <person name="Wang C."/>
            <person name="Rock S.M."/>
            <person name="Tin-Wollam A.-M."/>
            <person name="Maupin R."/>
            <person name="Latreille P."/>
            <person name="Wendl M.C."/>
            <person name="Yang S.-P."/>
            <person name="Pohl C."/>
            <person name="Wallis J.W."/>
            <person name="Spieth J."/>
            <person name="Bieri T.A."/>
            <person name="Berkowicz N."/>
            <person name="Nelson J.O."/>
            <person name="Osborne J."/>
            <person name="Ding L."/>
            <person name="Meyer R."/>
            <person name="Sabo A."/>
            <person name="Shotland Y."/>
            <person name="Sinha P."/>
            <person name="Wohldmann P.E."/>
            <person name="Cook L.L."/>
            <person name="Hickenbotham M.T."/>
            <person name="Eldred J."/>
            <person name="Williams D."/>
            <person name="Jones T.A."/>
            <person name="She X."/>
            <person name="Ciccarelli F.D."/>
            <person name="Izaurralde E."/>
            <person name="Taylor J."/>
            <person name="Schmutz J."/>
            <person name="Myers R.M."/>
            <person name="Cox D.R."/>
            <person name="Huang X."/>
            <person name="McPherson J.D."/>
            <person name="Mardis E.R."/>
            <person name="Clifton S.W."/>
            <person name="Warren W.C."/>
            <person name="Chinwalla A.T."/>
            <person name="Eddy S.R."/>
            <person name="Marra M.A."/>
            <person name="Ovcharenko I."/>
            <person name="Furey T.S."/>
            <person name="Miller W."/>
            <person name="Eichler E.E."/>
            <person name="Bork P."/>
            <person name="Suyama M."/>
            <person name="Torrents D."/>
            <person name="Waterston R.H."/>
            <person name="Wilson R.K."/>
        </authorList>
    </citation>
    <scope>NUCLEOTIDE SEQUENCE [LARGE SCALE GENOMIC DNA]</scope>
</reference>
<reference key="4">
    <citation type="submission" date="2005-09" db="EMBL/GenBank/DDBJ databases">
        <authorList>
            <person name="Mural R.J."/>
            <person name="Istrail S."/>
            <person name="Sutton G."/>
            <person name="Florea L."/>
            <person name="Halpern A.L."/>
            <person name="Mobarry C.M."/>
            <person name="Lippert R."/>
            <person name="Walenz B."/>
            <person name="Shatkay H."/>
            <person name="Dew I."/>
            <person name="Miller J.R."/>
            <person name="Flanigan M.J."/>
            <person name="Edwards N.J."/>
            <person name="Bolanos R."/>
            <person name="Fasulo D."/>
            <person name="Halldorsson B.V."/>
            <person name="Hannenhalli S."/>
            <person name="Turner R."/>
            <person name="Yooseph S."/>
            <person name="Lu F."/>
            <person name="Nusskern D.R."/>
            <person name="Shue B.C."/>
            <person name="Zheng X.H."/>
            <person name="Zhong F."/>
            <person name="Delcher A.L."/>
            <person name="Huson D.H."/>
            <person name="Kravitz S.A."/>
            <person name="Mouchard L."/>
            <person name="Reinert K."/>
            <person name="Remington K.A."/>
            <person name="Clark A.G."/>
            <person name="Waterman M.S."/>
            <person name="Eichler E.E."/>
            <person name="Adams M.D."/>
            <person name="Hunkapiller M.W."/>
            <person name="Myers E.W."/>
            <person name="Venter J.C."/>
        </authorList>
    </citation>
    <scope>NUCLEOTIDE SEQUENCE [LARGE SCALE GENOMIC DNA]</scope>
</reference>
<reference key="5">
    <citation type="journal article" date="2004" name="Genome Res.">
        <title>The status, quality, and expansion of the NIH full-length cDNA project: the Mammalian Gene Collection (MGC).</title>
        <authorList>
            <consortium name="The MGC Project Team"/>
        </authorList>
    </citation>
    <scope>NUCLEOTIDE SEQUENCE [LARGE SCALE MRNA]</scope>
    <source>
        <tissue>Muscle</tissue>
    </source>
</reference>
<reference key="6">
    <citation type="journal article" date="2004" name="FEBS Lett.">
        <title>N-glycosylation is required for efficient secretion of a novel human secreted glycoprotein, hPAP21.</title>
        <authorList>
            <person name="Zhou Y.-B."/>
            <person name="Liu F."/>
            <person name="Zhu Z.-D."/>
            <person name="Zhu H."/>
            <person name="Zhang X."/>
            <person name="Wang Z.-Q."/>
            <person name="Liu J.-H."/>
            <person name="Han Z.-G."/>
        </authorList>
    </citation>
    <scope>SUBCELLULAR LOCATION</scope>
    <scope>TISSUE SPECIFICITY</scope>
    <scope>GLYCOSYLATION AT ASN-171</scope>
    <scope>PROBABLE LACK OF GLYCOSYLATION AT ASN-121</scope>
    <scope>MUTAGENESIS OF ASN-121 AND ASN-171</scope>
</reference>
<gene>
    <name evidence="5" type="primary">PRADC1</name>
    <name type="synonym">C2orf7</name>
    <name type="synonym">PAP21</name>
    <name type="ORF">UNQ833/PRO1760</name>
</gene>
<comment type="function">
    <text evidence="1">Plays a role in the modulation of physical activity and adiposity.</text>
</comment>
<comment type="interaction">
    <interactant intactId="EBI-10297527">
        <id>Q9BSG0</id>
    </interactant>
    <interactant intactId="EBI-2107455">
        <id>Q08AM6</id>
        <label>VAC14</label>
    </interactant>
    <organismsDiffer>false</organismsDiffer>
    <experiments>3</experiments>
</comment>
<comment type="subcellular location">
    <subcellularLocation>
        <location evidence="3">Secreted</location>
    </subcellularLocation>
</comment>
<comment type="tissue specificity">
    <text evidence="3">Highly expressed in skeletal muscle, heart and liver. Expressed at intermediate level in kidney.</text>
</comment>
<comment type="PTM">
    <text evidence="3">N-glycosylated; required for efficient secretion.</text>
</comment>
<proteinExistence type="evidence at protein level"/>
<sequence>MVPGAAGWCCLVLWLPACVAAHGFRIHDYLYFQVLSPGDIRYIFTATPAKDFGGIFHTRYEQIHLVPAEPPEACGELSNGFFIQDQIALVERGGCSFLSKTRVVQEHGGRAVIISDNAVDNDSFYVEMIQDSTQRTADIPALFLLGRDGYMIRRSLEQHGLPWAIISIPVNVTSIPTFELLQPPWTFW</sequence>
<evidence type="ECO:0000250" key="1">
    <source>
        <dbReference type="UniProtKB" id="Q9D9N8"/>
    </source>
</evidence>
<evidence type="ECO:0000255" key="2"/>
<evidence type="ECO:0000269" key="3">
    <source>
    </source>
</evidence>
<evidence type="ECO:0000305" key="4"/>
<evidence type="ECO:0000312" key="5">
    <source>
        <dbReference type="HGNC" id="HGNC:16047"/>
    </source>
</evidence>
<accession>Q9BSG0</accession>
<accession>Q2Z1P2</accession>
<name>PADC1_HUMAN</name>